<protein>
    <recommendedName>
        <fullName evidence="1">Ribosomal RNA small subunit methyltransferase H</fullName>
        <ecNumber evidence="1">2.1.1.199</ecNumber>
    </recommendedName>
    <alternativeName>
        <fullName evidence="1">16S rRNA m(4)C1402 methyltransferase</fullName>
    </alternativeName>
    <alternativeName>
        <fullName evidence="1">rRNA (cytosine-N(4)-)-methyltransferase RsmH</fullName>
    </alternativeName>
</protein>
<reference key="1">
    <citation type="journal article" date="2008" name="BMC Genomics">
        <title>Acidithiobacillus ferrooxidans metabolism: from genome sequence to industrial applications.</title>
        <authorList>
            <person name="Valdes J."/>
            <person name="Pedroso I."/>
            <person name="Quatrini R."/>
            <person name="Dodson R.J."/>
            <person name="Tettelin H."/>
            <person name="Blake R. II"/>
            <person name="Eisen J.A."/>
            <person name="Holmes D.S."/>
        </authorList>
    </citation>
    <scope>NUCLEOTIDE SEQUENCE [LARGE SCALE GENOMIC DNA]</scope>
    <source>
        <strain>ATCC 23270 / DSM 14882 / CIP 104768 / NCIMB 8455</strain>
    </source>
</reference>
<proteinExistence type="inferred from homology"/>
<keyword id="KW-0963">Cytoplasm</keyword>
<keyword id="KW-0489">Methyltransferase</keyword>
<keyword id="KW-1185">Reference proteome</keyword>
<keyword id="KW-0698">rRNA processing</keyword>
<keyword id="KW-0949">S-adenosyl-L-methionine</keyword>
<keyword id="KW-0808">Transferase</keyword>
<organism>
    <name type="scientific">Acidithiobacillus ferrooxidans (strain ATCC 23270 / DSM 14882 / CIP 104768 / NCIMB 8455)</name>
    <name type="common">Ferrobacillus ferrooxidans (strain ATCC 23270)</name>
    <dbReference type="NCBI Taxonomy" id="243159"/>
    <lineage>
        <taxon>Bacteria</taxon>
        <taxon>Pseudomonadati</taxon>
        <taxon>Pseudomonadota</taxon>
        <taxon>Acidithiobacillia</taxon>
        <taxon>Acidithiobacillales</taxon>
        <taxon>Acidithiobacillaceae</taxon>
        <taxon>Acidithiobacillus</taxon>
    </lineage>
</organism>
<accession>B7J3W0</accession>
<evidence type="ECO:0000255" key="1">
    <source>
        <dbReference type="HAMAP-Rule" id="MF_01007"/>
    </source>
</evidence>
<evidence type="ECO:0000256" key="2">
    <source>
        <dbReference type="SAM" id="MobiDB-lite"/>
    </source>
</evidence>
<sequence>MRSANEPDATHVAVLLAETIVALRPALHTGAAVRCVDATGGRGGHSAALLAELGAADTLLILDRDPSAIAALRARFAQDSRVYIRQARFSQLAEVLAALEWERVDAILADLGVSSPQLDEAARGFSFLRDGPLDMRMDPGADRSAAEWLATATEADMTRVLREYGEERFARPIARAILRAREQAPITRTLQLAELIAQVLPRHETGQHPATRSFQGIRIFINRELEELEAFLPQAMNALRAGGRLAVISFHSLEDRLVKRFFRADDYRISADVPLRASELPPLPWHPAGKALRAGPRETRDNPRSRSAVLRVAERSERHAA</sequence>
<dbReference type="EC" id="2.1.1.199" evidence="1"/>
<dbReference type="EMBL" id="CP001219">
    <property type="protein sequence ID" value="ACK77961.1"/>
    <property type="molecule type" value="Genomic_DNA"/>
</dbReference>
<dbReference type="RefSeq" id="WP_009562424.1">
    <property type="nucleotide sequence ID" value="NC_011761.1"/>
</dbReference>
<dbReference type="SMR" id="B7J3W0"/>
<dbReference type="STRING" id="243159.AFE_0214"/>
<dbReference type="PaxDb" id="243159-AFE_0214"/>
<dbReference type="GeneID" id="65279599"/>
<dbReference type="KEGG" id="afr:AFE_0214"/>
<dbReference type="eggNOG" id="COG0275">
    <property type="taxonomic scope" value="Bacteria"/>
</dbReference>
<dbReference type="HOGENOM" id="CLU_038422_2_0_6"/>
<dbReference type="Proteomes" id="UP000001362">
    <property type="component" value="Chromosome"/>
</dbReference>
<dbReference type="GO" id="GO:0005737">
    <property type="term" value="C:cytoplasm"/>
    <property type="evidence" value="ECO:0007669"/>
    <property type="project" value="UniProtKB-SubCell"/>
</dbReference>
<dbReference type="GO" id="GO:0071424">
    <property type="term" value="F:rRNA (cytosine-N4-)-methyltransferase activity"/>
    <property type="evidence" value="ECO:0007669"/>
    <property type="project" value="UniProtKB-UniRule"/>
</dbReference>
<dbReference type="GO" id="GO:0070475">
    <property type="term" value="P:rRNA base methylation"/>
    <property type="evidence" value="ECO:0007669"/>
    <property type="project" value="UniProtKB-UniRule"/>
</dbReference>
<dbReference type="FunFam" id="1.10.150.170:FF:000001">
    <property type="entry name" value="Ribosomal RNA small subunit methyltransferase H"/>
    <property type="match status" value="1"/>
</dbReference>
<dbReference type="Gene3D" id="1.10.150.170">
    <property type="entry name" value="Putative methyltransferase TM0872, insert domain"/>
    <property type="match status" value="1"/>
</dbReference>
<dbReference type="Gene3D" id="3.40.50.150">
    <property type="entry name" value="Vaccinia Virus protein VP39"/>
    <property type="match status" value="1"/>
</dbReference>
<dbReference type="HAMAP" id="MF_01007">
    <property type="entry name" value="16SrRNA_methyltr_H"/>
    <property type="match status" value="1"/>
</dbReference>
<dbReference type="InterPro" id="IPR002903">
    <property type="entry name" value="RsmH"/>
</dbReference>
<dbReference type="InterPro" id="IPR023397">
    <property type="entry name" value="SAM-dep_MeTrfase_MraW_recog"/>
</dbReference>
<dbReference type="InterPro" id="IPR029063">
    <property type="entry name" value="SAM-dependent_MTases_sf"/>
</dbReference>
<dbReference type="NCBIfam" id="TIGR00006">
    <property type="entry name" value="16S rRNA (cytosine(1402)-N(4))-methyltransferase RsmH"/>
    <property type="match status" value="1"/>
</dbReference>
<dbReference type="PANTHER" id="PTHR11265:SF0">
    <property type="entry name" value="12S RRNA N4-METHYLCYTIDINE METHYLTRANSFERASE"/>
    <property type="match status" value="1"/>
</dbReference>
<dbReference type="PANTHER" id="PTHR11265">
    <property type="entry name" value="S-ADENOSYL-METHYLTRANSFERASE MRAW"/>
    <property type="match status" value="1"/>
</dbReference>
<dbReference type="Pfam" id="PF01795">
    <property type="entry name" value="Methyltransf_5"/>
    <property type="match status" value="1"/>
</dbReference>
<dbReference type="PIRSF" id="PIRSF004486">
    <property type="entry name" value="MraW"/>
    <property type="match status" value="1"/>
</dbReference>
<dbReference type="SUPFAM" id="SSF81799">
    <property type="entry name" value="Putative methyltransferase TM0872, insert domain"/>
    <property type="match status" value="1"/>
</dbReference>
<dbReference type="SUPFAM" id="SSF53335">
    <property type="entry name" value="S-adenosyl-L-methionine-dependent methyltransferases"/>
    <property type="match status" value="1"/>
</dbReference>
<feature type="chain" id="PRO_0000386681" description="Ribosomal RNA small subunit methyltransferase H">
    <location>
        <begin position="1"/>
        <end position="321"/>
    </location>
</feature>
<feature type="region of interest" description="Disordered" evidence="2">
    <location>
        <begin position="286"/>
        <end position="321"/>
    </location>
</feature>
<feature type="compositionally biased region" description="Basic and acidic residues" evidence="2">
    <location>
        <begin position="295"/>
        <end position="304"/>
    </location>
</feature>
<feature type="compositionally biased region" description="Basic and acidic residues" evidence="2">
    <location>
        <begin position="312"/>
        <end position="321"/>
    </location>
</feature>
<feature type="binding site" evidence="1">
    <location>
        <begin position="43"/>
        <end position="45"/>
    </location>
    <ligand>
        <name>S-adenosyl-L-methionine</name>
        <dbReference type="ChEBI" id="CHEBI:59789"/>
    </ligand>
</feature>
<feature type="binding site" evidence="1">
    <location>
        <position position="63"/>
    </location>
    <ligand>
        <name>S-adenosyl-L-methionine</name>
        <dbReference type="ChEBI" id="CHEBI:59789"/>
    </ligand>
</feature>
<feature type="binding site" evidence="1">
    <location>
        <position position="89"/>
    </location>
    <ligand>
        <name>S-adenosyl-L-methionine</name>
        <dbReference type="ChEBI" id="CHEBI:59789"/>
    </ligand>
</feature>
<feature type="binding site" evidence="1">
    <location>
        <position position="110"/>
    </location>
    <ligand>
        <name>S-adenosyl-L-methionine</name>
        <dbReference type="ChEBI" id="CHEBI:59789"/>
    </ligand>
</feature>
<feature type="binding site" evidence="1">
    <location>
        <position position="117"/>
    </location>
    <ligand>
        <name>S-adenosyl-L-methionine</name>
        <dbReference type="ChEBI" id="CHEBI:59789"/>
    </ligand>
</feature>
<comment type="function">
    <text evidence="1">Specifically methylates the N4 position of cytidine in position 1402 (C1402) of 16S rRNA.</text>
</comment>
<comment type="catalytic activity">
    <reaction evidence="1">
        <text>cytidine(1402) in 16S rRNA + S-adenosyl-L-methionine = N(4)-methylcytidine(1402) in 16S rRNA + S-adenosyl-L-homocysteine + H(+)</text>
        <dbReference type="Rhea" id="RHEA:42928"/>
        <dbReference type="Rhea" id="RHEA-COMP:10286"/>
        <dbReference type="Rhea" id="RHEA-COMP:10287"/>
        <dbReference type="ChEBI" id="CHEBI:15378"/>
        <dbReference type="ChEBI" id="CHEBI:57856"/>
        <dbReference type="ChEBI" id="CHEBI:59789"/>
        <dbReference type="ChEBI" id="CHEBI:74506"/>
        <dbReference type="ChEBI" id="CHEBI:82748"/>
        <dbReference type="EC" id="2.1.1.199"/>
    </reaction>
</comment>
<comment type="subcellular location">
    <subcellularLocation>
        <location evidence="1">Cytoplasm</location>
    </subcellularLocation>
</comment>
<comment type="similarity">
    <text evidence="1">Belongs to the methyltransferase superfamily. RsmH family.</text>
</comment>
<gene>
    <name evidence="1" type="primary">rsmH</name>
    <name type="synonym">mraW</name>
    <name type="ordered locus">AFE_0214</name>
</gene>
<name>RSMH_ACIF2</name>